<reference key="1">
    <citation type="journal article" date="2002" name="FEBS Lett.">
        <title>Novel human G protein-coupled receptors with long N-terminals containing GPS domains and Ser/Thr-rich regions.</title>
        <authorList>
            <person name="Fredriksson R."/>
            <person name="Lagerstroem M.C."/>
            <person name="Hoeglund P.J."/>
            <person name="Schioeth H.B."/>
        </authorList>
    </citation>
    <scope>NUCLEOTIDE SEQUENCE [MRNA] (ISOFORM 2)</scope>
</reference>
<reference key="2">
    <citation type="submission" date="2003-12" db="EMBL/GenBank/DDBJ databases">
        <title>Complete coding sequence of GPR116.</title>
        <authorList>
            <person name="Bonner T.I."/>
            <person name="Nagle J.W."/>
            <person name="Kauffman D."/>
        </authorList>
    </citation>
    <scope>NUCLEOTIDE SEQUENCE [MRNA] (ISOFORM 1)</scope>
    <scope>VARIANT MET-604</scope>
    <source>
        <tissue>Brain</tissue>
    </source>
</reference>
<reference key="3">
    <citation type="journal article" date="1998" name="DNA Res.">
        <title>Prediction of the coding sequences of unidentified human genes. XII. The complete sequences of 100 new cDNA clones from brain which code for large proteins in vitro.</title>
        <authorList>
            <person name="Nagase T."/>
            <person name="Ishikawa K."/>
            <person name="Suyama M."/>
            <person name="Kikuno R."/>
            <person name="Hirosawa M."/>
            <person name="Miyajima N."/>
            <person name="Tanaka A."/>
            <person name="Kotani H."/>
            <person name="Nomura N."/>
            <person name="Ohara O."/>
        </authorList>
    </citation>
    <scope>NUCLEOTIDE SEQUENCE [LARGE SCALE MRNA] (ISOFORM 1)</scope>
    <scope>VARIANTS MET-604 AND THR-856</scope>
    <source>
        <tissue>Brain</tissue>
    </source>
</reference>
<reference key="4">
    <citation type="submission" date="2005-08" db="EMBL/GenBank/DDBJ databases">
        <authorList>
            <person name="Ohara O."/>
            <person name="Nagase T."/>
            <person name="Kikuno R."/>
            <person name="Ishikawa K."/>
            <person name="Suyama M."/>
        </authorList>
    </citation>
    <scope>SEQUENCE REVISION</scope>
</reference>
<reference key="5">
    <citation type="journal article" date="2007" name="BMC Genomics">
        <title>The full-ORF clone resource of the German cDNA consortium.</title>
        <authorList>
            <person name="Bechtel S."/>
            <person name="Rosenfelder H."/>
            <person name="Duda A."/>
            <person name="Schmidt C.P."/>
            <person name="Ernst U."/>
            <person name="Wellenreuther R."/>
            <person name="Mehrle A."/>
            <person name="Schuster C."/>
            <person name="Bahr A."/>
            <person name="Bloecker H."/>
            <person name="Heubner D."/>
            <person name="Hoerlein A."/>
            <person name="Michel G."/>
            <person name="Wedler H."/>
            <person name="Koehrer K."/>
            <person name="Ottenwaelder B."/>
            <person name="Poustka A."/>
            <person name="Wiemann S."/>
            <person name="Schupp I."/>
        </authorList>
    </citation>
    <scope>NUCLEOTIDE SEQUENCE [LARGE SCALE MRNA] (ISOFORM 3)</scope>
    <scope>NUCLEOTIDE SEQUENCE [LARGE SCALE MRNA] OF 1-613 (ISOFORM 1)</scope>
    <scope>VARIANTS MET-604 AND ILE-801</scope>
    <source>
        <tissue>Brain</tissue>
        <tissue>Cervix</tissue>
    </source>
</reference>
<reference key="6">
    <citation type="journal article" date="2003" name="Nature">
        <title>The DNA sequence and analysis of human chromosome 6.</title>
        <authorList>
            <person name="Mungall A.J."/>
            <person name="Palmer S.A."/>
            <person name="Sims S.K."/>
            <person name="Edwards C.A."/>
            <person name="Ashurst J.L."/>
            <person name="Wilming L."/>
            <person name="Jones M.C."/>
            <person name="Horton R."/>
            <person name="Hunt S.E."/>
            <person name="Scott C.E."/>
            <person name="Gilbert J.G.R."/>
            <person name="Clamp M.E."/>
            <person name="Bethel G."/>
            <person name="Milne S."/>
            <person name="Ainscough R."/>
            <person name="Almeida J.P."/>
            <person name="Ambrose K.D."/>
            <person name="Andrews T.D."/>
            <person name="Ashwell R.I.S."/>
            <person name="Babbage A.K."/>
            <person name="Bagguley C.L."/>
            <person name="Bailey J."/>
            <person name="Banerjee R."/>
            <person name="Barker D.J."/>
            <person name="Barlow K.F."/>
            <person name="Bates K."/>
            <person name="Beare D.M."/>
            <person name="Beasley H."/>
            <person name="Beasley O."/>
            <person name="Bird C.P."/>
            <person name="Blakey S.E."/>
            <person name="Bray-Allen S."/>
            <person name="Brook J."/>
            <person name="Brown A.J."/>
            <person name="Brown J.Y."/>
            <person name="Burford D.C."/>
            <person name="Burrill W."/>
            <person name="Burton J."/>
            <person name="Carder C."/>
            <person name="Carter N.P."/>
            <person name="Chapman J.C."/>
            <person name="Clark S.Y."/>
            <person name="Clark G."/>
            <person name="Clee C.M."/>
            <person name="Clegg S."/>
            <person name="Cobley V."/>
            <person name="Collier R.E."/>
            <person name="Collins J.E."/>
            <person name="Colman L.K."/>
            <person name="Corby N.R."/>
            <person name="Coville G.J."/>
            <person name="Culley K.M."/>
            <person name="Dhami P."/>
            <person name="Davies J."/>
            <person name="Dunn M."/>
            <person name="Earthrowl M.E."/>
            <person name="Ellington A.E."/>
            <person name="Evans K.A."/>
            <person name="Faulkner L."/>
            <person name="Francis M.D."/>
            <person name="Frankish A."/>
            <person name="Frankland J."/>
            <person name="French L."/>
            <person name="Garner P."/>
            <person name="Garnett J."/>
            <person name="Ghori M.J."/>
            <person name="Gilby L.M."/>
            <person name="Gillson C.J."/>
            <person name="Glithero R.J."/>
            <person name="Grafham D.V."/>
            <person name="Grant M."/>
            <person name="Gribble S."/>
            <person name="Griffiths C."/>
            <person name="Griffiths M.N.D."/>
            <person name="Hall R."/>
            <person name="Halls K.S."/>
            <person name="Hammond S."/>
            <person name="Harley J.L."/>
            <person name="Hart E.A."/>
            <person name="Heath P.D."/>
            <person name="Heathcott R."/>
            <person name="Holmes S.J."/>
            <person name="Howden P.J."/>
            <person name="Howe K.L."/>
            <person name="Howell G.R."/>
            <person name="Huckle E."/>
            <person name="Humphray S.J."/>
            <person name="Humphries M.D."/>
            <person name="Hunt A.R."/>
            <person name="Johnson C.M."/>
            <person name="Joy A.A."/>
            <person name="Kay M."/>
            <person name="Keenan S.J."/>
            <person name="Kimberley A.M."/>
            <person name="King A."/>
            <person name="Laird G.K."/>
            <person name="Langford C."/>
            <person name="Lawlor S."/>
            <person name="Leongamornlert D.A."/>
            <person name="Leversha M."/>
            <person name="Lloyd C.R."/>
            <person name="Lloyd D.M."/>
            <person name="Loveland J.E."/>
            <person name="Lovell J."/>
            <person name="Martin S."/>
            <person name="Mashreghi-Mohammadi M."/>
            <person name="Maslen G.L."/>
            <person name="Matthews L."/>
            <person name="McCann O.T."/>
            <person name="McLaren S.J."/>
            <person name="McLay K."/>
            <person name="McMurray A."/>
            <person name="Moore M.J.F."/>
            <person name="Mullikin J.C."/>
            <person name="Niblett D."/>
            <person name="Nickerson T."/>
            <person name="Novik K.L."/>
            <person name="Oliver K."/>
            <person name="Overton-Larty E.K."/>
            <person name="Parker A."/>
            <person name="Patel R."/>
            <person name="Pearce A.V."/>
            <person name="Peck A.I."/>
            <person name="Phillimore B.J.C.T."/>
            <person name="Phillips S."/>
            <person name="Plumb R.W."/>
            <person name="Porter K.M."/>
            <person name="Ramsey Y."/>
            <person name="Ranby S.A."/>
            <person name="Rice C.M."/>
            <person name="Ross M.T."/>
            <person name="Searle S.M."/>
            <person name="Sehra H.K."/>
            <person name="Sheridan E."/>
            <person name="Skuce C.D."/>
            <person name="Smith S."/>
            <person name="Smith M."/>
            <person name="Spraggon L."/>
            <person name="Squares S.L."/>
            <person name="Steward C.A."/>
            <person name="Sycamore N."/>
            <person name="Tamlyn-Hall G."/>
            <person name="Tester J."/>
            <person name="Theaker A.J."/>
            <person name="Thomas D.W."/>
            <person name="Thorpe A."/>
            <person name="Tracey A."/>
            <person name="Tromans A."/>
            <person name="Tubby B."/>
            <person name="Wall M."/>
            <person name="Wallis J.M."/>
            <person name="West A.P."/>
            <person name="White S.S."/>
            <person name="Whitehead S.L."/>
            <person name="Whittaker H."/>
            <person name="Wild A."/>
            <person name="Willey D.J."/>
            <person name="Wilmer T.E."/>
            <person name="Wood J.M."/>
            <person name="Wray P.W."/>
            <person name="Wyatt J.C."/>
            <person name="Young L."/>
            <person name="Younger R.M."/>
            <person name="Bentley D.R."/>
            <person name="Coulson A."/>
            <person name="Durbin R.M."/>
            <person name="Hubbard T."/>
            <person name="Sulston J.E."/>
            <person name="Dunham I."/>
            <person name="Rogers J."/>
            <person name="Beck S."/>
        </authorList>
    </citation>
    <scope>NUCLEOTIDE SEQUENCE [LARGE SCALE GENOMIC DNA]</scope>
</reference>
<reference key="7">
    <citation type="journal article" date="2004" name="Genome Res.">
        <title>The status, quality, and expansion of the NIH full-length cDNA project: the Mammalian Gene Collection (MGC).</title>
        <authorList>
            <consortium name="The MGC Project Team"/>
        </authorList>
    </citation>
    <scope>NUCLEOTIDE SEQUENCE [LARGE SCALE MRNA] (ISOFORM 1)</scope>
    <scope>VARIANTS MET-604 AND THR-856</scope>
</reference>
<reference key="8">
    <citation type="journal article" date="2003" name="Proc. Natl. Acad. Sci. U.S.A.">
        <title>The G protein-coupled receptor repertoires of human and mouse.</title>
        <authorList>
            <person name="Vassilatis D.K."/>
            <person name="Hohmann J.G."/>
            <person name="Zeng H."/>
            <person name="Li F."/>
            <person name="Ranchalis J.E."/>
            <person name="Mortrud M.T."/>
            <person name="Brown A."/>
            <person name="Rodriguez S.S."/>
            <person name="Weller J.R."/>
            <person name="Wright A.C."/>
            <person name="Bergmann J.E."/>
            <person name="Gaitanaris G.A."/>
        </authorList>
    </citation>
    <scope>NUCLEOTIDE SEQUENCE [LARGE SCALE MRNA] OF 949-1062</scope>
</reference>
<reference key="9">
    <citation type="journal article" date="2005" name="J. Proteome Res.">
        <title>Human plasma N-glycoproteome analysis by immunoaffinity subtraction, hydrazide chemistry, and mass spectrometry.</title>
        <authorList>
            <person name="Liu T."/>
            <person name="Qian W.-J."/>
            <person name="Gritsenko M.A."/>
            <person name="Camp D.G. II"/>
            <person name="Monroe M.E."/>
            <person name="Moore R.J."/>
            <person name="Smith R.D."/>
        </authorList>
    </citation>
    <scope>GLYCOSYLATION [LARGE SCALE ANALYSIS] AT ASN-256 AND ASN-315</scope>
    <source>
        <tissue>Plasma</tissue>
    </source>
</reference>
<reference key="10">
    <citation type="journal article" date="2013" name="Am. J. Respir. Cell Mol. Biol.">
        <title>Orphan G protein-coupled receptor GPR116 regulates pulmonary surfactant pool size.</title>
        <authorList>
            <person name="Bridges J.P."/>
            <person name="Ludwig M.G."/>
            <person name="Mueller M."/>
            <person name="Kinzel B."/>
            <person name="Sato A."/>
            <person name="Xu Y."/>
            <person name="Whitsett J.A."/>
            <person name="Ikegami M."/>
        </authorList>
    </citation>
    <scope>SUBCELLULAR LOCATION</scope>
</reference>
<reference key="11">
    <citation type="journal article" date="2013" name="Cell Rep.">
        <title>Essential regulation of lung surfactant homeostasis by the orphan G protein-coupled receptor GPR116.</title>
        <authorList>
            <person name="Yang M.Y."/>
            <person name="Hilton M.B."/>
            <person name="Seaman S."/>
            <person name="Haines D.C."/>
            <person name="Nagashima K."/>
            <person name="Burks C.M."/>
            <person name="Tessarollo L."/>
            <person name="Ivanova P.T."/>
            <person name="Brown H.A."/>
            <person name="Umstead T.M."/>
            <person name="Floros J."/>
            <person name="Chroneos Z.C."/>
            <person name="St Croix B."/>
        </authorList>
    </citation>
    <scope>SUBCELLULAR LOCATION</scope>
    <scope>TISSUE SPECIFICITY</scope>
</reference>
<reference key="12">
    <citation type="journal article" date="2015" name="Pharmacol. Rev.">
        <title>International union of basic and clinical pharmacology. XCIV. Adhesion G protein-coupled receptors.</title>
        <authorList>
            <person name="Hamann J."/>
            <person name="Aust G."/>
            <person name="Arac D."/>
            <person name="Engel F.B."/>
            <person name="Formstone C."/>
            <person name="Fredriksson R."/>
            <person name="Hall R.A."/>
            <person name="Harty B.L."/>
            <person name="Kirchhoff C."/>
            <person name="Knapp B."/>
            <person name="Krishnan A."/>
            <person name="Liebscher I."/>
            <person name="Lin H.H."/>
            <person name="Martinelli D.C."/>
            <person name="Monk K.R."/>
            <person name="Peeters M.C."/>
            <person name="Piao X."/>
            <person name="Promel S."/>
            <person name="Schoneberg T."/>
            <person name="Schwartz T.W."/>
            <person name="Singer K."/>
            <person name="Stacey M."/>
            <person name="Ushkaryov Y.A."/>
            <person name="Vallon M."/>
            <person name="Wolfrum U."/>
            <person name="Wright M.W."/>
            <person name="Xu L."/>
            <person name="Langenhan T."/>
            <person name="Schioth H.B."/>
        </authorList>
    </citation>
    <scope>NOMENCLATURE</scope>
</reference>
<reference key="13">
    <citation type="journal article" date="2017" name="JCI Insight">
        <title>Epithelial Gpr116 regulates pulmonary alveolar homeostasis via Gq/11 signaling.</title>
        <authorList>
            <person name="Brown K."/>
            <person name="Filuta A."/>
            <person name="Ludwig M.G."/>
            <person name="Seuwen K."/>
            <person name="Jaros J."/>
            <person name="Vidal S."/>
            <person name="Arora K."/>
            <person name="Naren A.P."/>
            <person name="Kandasamy K."/>
            <person name="Parthasarathi K."/>
            <person name="Offermanns S."/>
            <person name="Mason R.J."/>
            <person name="Miller W.E."/>
            <person name="Whitsett J.A."/>
            <person name="Bridges J.P."/>
        </authorList>
    </citation>
    <scope>FUNCTION</scope>
    <scope>IDENTIFICATION OF THE TETHERED LIGAND</scope>
    <scope>TISSUE SPECIFICITY</scope>
</reference>
<reference key="14">
    <citation type="journal article" date="2021" name="Nat. Commun.">
        <title>Orphan GPR116 mediates the insulin sensitizing effects of the hepatokine FNDC4 in adipose tissue.</title>
        <authorList>
            <person name="Georgiadi A."/>
            <person name="Lopez-Salazar V."/>
            <person name="Merahbi R.E."/>
            <person name="Karikari R.A."/>
            <person name="Ma X."/>
            <person name="Mourao A."/>
            <person name="Klepac K."/>
            <person name="Buehler L."/>
            <person name="Alfaro A.J."/>
            <person name="Kaczmarek I."/>
            <person name="Linford A."/>
            <person name="Bosma M."/>
            <person name="Shilkova O."/>
            <person name="Ritvos O."/>
            <person name="Nakamura N."/>
            <person name="Hirose S."/>
            <person name="Lassi M."/>
            <person name="Teperino R."/>
            <person name="Machado J."/>
            <person name="Scheideler M."/>
            <person name="Dietrich A."/>
            <person name="Geerlof A."/>
            <person name="Feuchtinger A."/>
            <person name="Blutke A."/>
            <person name="Fischer K."/>
            <person name="Mueller T.D."/>
            <person name="Kessler K."/>
            <person name="Schoeneberg T."/>
            <person name="Thor D."/>
            <person name="Hornemann S."/>
            <person name="Kruse M."/>
            <person name="Nawroth P."/>
            <person name="Pivovarova-Ramich O."/>
            <person name="Pfeiffer A.F.H."/>
            <person name="Sattler M."/>
            <person name="Blueher M."/>
            <person name="Herzig S."/>
        </authorList>
    </citation>
    <scope>IDENTIFICATION AS FNDC4 RECEPTOR</scope>
    <scope>TISSUE SPECIFICITY</scope>
</reference>
<reference key="15">
    <citation type="journal article" date="2022" name="Elife">
        <title>Regulation of pulmonary surfactant by the adhesion GPCR GPR116/ADGRF5 requires a tethered agonist-mediated activation mechanism.</title>
        <authorList>
            <person name="Bridges J.P."/>
            <person name="Safina C."/>
            <person name="Pirard B."/>
            <person name="Brown K."/>
            <person name="Filuta A."/>
            <person name="Panchanathan R."/>
            <person name="Bouhelal R."/>
            <person name="Reymann N."/>
            <person name="Patel S."/>
            <person name="Seuwen K."/>
            <person name="Miller W.E."/>
            <person name="Ludwig M.G."/>
        </authorList>
    </citation>
    <scope>MUTAGENESIS OF 991-THR--LEU-996; GLY-1009; 1075-GLN--ASN-1077; 1080-ILE--LYS-1083; ARG-1153; THR-1157; VAL-1161; 1240-PHE--THR-1243; ALA-1252 AND VAL-1256</scope>
</reference>
<evidence type="ECO:0000250" key="1">
    <source>
        <dbReference type="UniProtKB" id="G5E8Q8"/>
    </source>
</evidence>
<evidence type="ECO:0000250" key="2">
    <source>
        <dbReference type="UniProtKB" id="Q9WVT0"/>
    </source>
</evidence>
<evidence type="ECO:0000255" key="3"/>
<evidence type="ECO:0000255" key="4">
    <source>
        <dbReference type="PROSITE-ProRule" id="PRU00098"/>
    </source>
</evidence>
<evidence type="ECO:0000255" key="5">
    <source>
        <dbReference type="PROSITE-ProRule" id="PRU00114"/>
    </source>
</evidence>
<evidence type="ECO:0000255" key="6">
    <source>
        <dbReference type="PROSITE-ProRule" id="PRU00188"/>
    </source>
</evidence>
<evidence type="ECO:0000256" key="7">
    <source>
        <dbReference type="SAM" id="MobiDB-lite"/>
    </source>
</evidence>
<evidence type="ECO:0000269" key="8">
    <source>
    </source>
</evidence>
<evidence type="ECO:0000269" key="9">
    <source>
    </source>
</evidence>
<evidence type="ECO:0000269" key="10">
    <source>
    </source>
</evidence>
<evidence type="ECO:0000269" key="11">
    <source>
    </source>
</evidence>
<evidence type="ECO:0000269" key="12">
    <source>
    </source>
</evidence>
<evidence type="ECO:0000269" key="13">
    <source>
    </source>
</evidence>
<evidence type="ECO:0000269" key="14">
    <source>
    </source>
</evidence>
<evidence type="ECO:0000269" key="15">
    <source>
    </source>
</evidence>
<evidence type="ECO:0000269" key="16">
    <source>
    </source>
</evidence>
<evidence type="ECO:0000269" key="17">
    <source ref="2"/>
</evidence>
<evidence type="ECO:0000303" key="18">
    <source>
    </source>
</evidence>
<evidence type="ECO:0000303" key="19">
    <source>
    </source>
</evidence>
<evidence type="ECO:0000303" key="20">
    <source>
    </source>
</evidence>
<evidence type="ECO:0000305" key="21"/>
<evidence type="ECO:0000305" key="22">
    <source>
    </source>
</evidence>
<evidence type="ECO:0000312" key="23">
    <source>
        <dbReference type="HGNC" id="HGNC:19030"/>
    </source>
</evidence>
<comment type="function">
    <text evidence="1 14 15">Adhesion G protein-coupled receptor (PubMed:28570277). In alveolar type II (ATII or AT2) cells, required for normal lung surfactant homeostasis (PubMed:28570277). Modulation of both surfactant secretion and uptake by ATII cells is mediated by the downstream activation of GNAQ/GNA11 proteins and may be a consequence of increased cortical F-actin assembly induced by ADGRF5 activation (PubMed:28570277). In the kidney, may play a role in the regulation of acid excretion into the primary urine, possibly by regulating the surface expression of V-ATPase proton pump (By similarity). As a receptor for soluble FNDC4 (sFNDC4), required for proper systemic glucose tolerance, specifically sensitizing white adipose tissue to insulin. Also plays a role in sFNDC4-induced decrease of local inflammation in white adipose tissue (PubMed:34016966).</text>
</comment>
<comment type="activity regulation">
    <text evidence="21">As an adhesion G protein-coupled receptor (aGPCR) exhibits a large N-terminal extracellular domain containing highly conserved GPCR autoproteolysis-inducing (GAIN) domain. During synthesis, intracellular autoproteolytic processing of nascent chain within the GAIN domain generates a mature protein, consisting of an N-terminal fragment that is non-covalently linked to the C-terminal fragment. The mature protein is routed to the plasma membrane where the N- and C-terminal fragments remain associated, forming the holoreceptor. Dissociation of the aGPCR fragments stimulates G protein signaling through the action of the tethered-peptide agonist stalk that is occluded within the GAIN domain in the holoreceptor form. This dissociation might be induced by ligand binding, such as that of sFNDC4.</text>
</comment>
<comment type="subunit">
    <text evidence="1 2">Homodimer; disulfide-linked. Heterodimer of 2 chains generated by proteolytic processing; the large extracellular N-terminal fragment and the membrane-bound C-terminal fragment predominantly remain associated and non-covalently linked. Fragment generates by the processing enzyme furin remains attached to the extracellular N-terminal fragment. Interacts (via N-terminal extracellular domain) with SFTPD.</text>
</comment>
<comment type="interaction">
    <interactant intactId="EBI-7600130">
        <id>Q8IZF2</id>
    </interactant>
    <interactant intactId="EBI-12011224">
        <id>Q9NPB3</id>
        <label>CABP2</label>
    </interactant>
    <organismsDiffer>false</organismsDiffer>
    <experiments>3</experiments>
</comment>
<comment type="interaction">
    <interactant intactId="EBI-7600130">
        <id>Q8IZF2</id>
    </interactant>
    <interactant intactId="EBI-10242151">
        <id>Q53EP0-3</id>
        <label>FNDC3B</label>
    </interactant>
    <organismsDiffer>false</organismsDiffer>
    <experiments>3</experiments>
</comment>
<comment type="interaction">
    <interactant intactId="EBI-7600130">
        <id>Q8IZF2</id>
    </interactant>
    <interactant intactId="EBI-11956831">
        <id>Q13952-2</id>
        <label>NFYC</label>
    </interactant>
    <organismsDiffer>false</organismsDiffer>
    <experiments>3</experiments>
</comment>
<comment type="interaction">
    <interactant intactId="EBI-7600130">
        <id>Q8IZF2</id>
    </interactant>
    <interactant intactId="EBI-12235008">
        <id>P55735-3</id>
        <label>SEC13</label>
    </interactant>
    <organismsDiffer>false</organismsDiffer>
    <experiments>3</experiments>
</comment>
<comment type="subcellular location">
    <subcellularLocation>
        <location evidence="12 13">Cell membrane</location>
        <topology evidence="3">Multi-pass membrane protein</topology>
    </subcellularLocation>
</comment>
<comment type="alternative products">
    <event type="alternative splicing"/>
    <isoform>
        <id>Q8IZF2-1</id>
        <name>1</name>
        <sequence type="displayed"/>
    </isoform>
    <isoform>
        <id>Q8IZF2-2</id>
        <name>2</name>
        <sequence type="described" ref="VSP_010837 VSP_010838"/>
    </isoform>
    <isoform>
        <id>Q8IZF2-3</id>
        <name>3</name>
        <sequence type="described" ref="VSP_039130"/>
    </isoform>
</comment>
<comment type="tissue specificity">
    <text evidence="13 14 15">Expressed in lung endothelial cells and in alveolar type II (ATII) cells (at protein level) (PubMed:23684610, PubMed:28570277). Expressed high levels in subcutaneous adipose tissue in lean individuals and at lower levels in visceral fat. Expression levels in subcutaneous adipose tissue drastically drop in obese individuals (PubMed:34016966).</text>
</comment>
<comment type="PTM">
    <text evidence="2">Highly glycosylated.</text>
</comment>
<comment type="PTM">
    <text evidence="2">Proteolytically cleaved at multiple sites: one in the GPS region of the GAIN-B domain (S1 site) and the other in the SEA domain (S2 site). The proteolytic cleavage at S1 site generates an extracellular subunit and a seven-transmembrane subunit. The proteolytic cleavage at S2 site generates a fragment that undergoes proteolytic cleavage by the processing enzyme furin.</text>
</comment>
<comment type="similarity">
    <text evidence="21">Belongs to the G-protein coupled receptor 2 family. Adhesion G-protein coupled receptor (ADGR) subfamily.</text>
</comment>
<comment type="sequence caution" evidence="21">
    <conflict type="erroneous initiation">
        <sequence resource="EMBL-CDS" id="BAA34478"/>
    </conflict>
    <text>Extended N-terminus.</text>
</comment>
<comment type="sequence caution" evidence="21">
    <conflict type="miscellaneous discrepancy">
        <sequence resource="EMBL-CDS" id="CAB43394"/>
    </conflict>
    <text>Contaminating sequence. Potential poly-A sequence.</text>
</comment>
<protein>
    <recommendedName>
        <fullName evidence="20">Adhesion G protein-coupled receptor F5</fullName>
    </recommendedName>
    <alternativeName>
        <fullName>G-protein coupled receptor 116</fullName>
    </alternativeName>
</protein>
<keyword id="KW-0025">Alternative splicing</keyword>
<keyword id="KW-1003">Cell membrane</keyword>
<keyword id="KW-1015">Disulfide bond</keyword>
<keyword id="KW-0297">G-protein coupled receptor</keyword>
<keyword id="KW-0325">Glycoprotein</keyword>
<keyword id="KW-0393">Immunoglobulin domain</keyword>
<keyword id="KW-0472">Membrane</keyword>
<keyword id="KW-0597">Phosphoprotein</keyword>
<keyword id="KW-1267">Proteomics identification</keyword>
<keyword id="KW-0675">Receptor</keyword>
<keyword id="KW-1185">Reference proteome</keyword>
<keyword id="KW-0677">Repeat</keyword>
<keyword id="KW-0732">Signal</keyword>
<keyword id="KW-0807">Transducer</keyword>
<keyword id="KW-0812">Transmembrane</keyword>
<keyword id="KW-1133">Transmembrane helix</keyword>
<dbReference type="EMBL" id="AY140958">
    <property type="protein sequence ID" value="AAN46672.1"/>
    <property type="molecule type" value="mRNA"/>
</dbReference>
<dbReference type="EMBL" id="AY498875">
    <property type="protein sequence ID" value="AAS21061.1"/>
    <property type="molecule type" value="mRNA"/>
</dbReference>
<dbReference type="EMBL" id="AB018301">
    <property type="protein sequence ID" value="BAA34478.2"/>
    <property type="status" value="ALT_INIT"/>
    <property type="molecule type" value="mRNA"/>
</dbReference>
<dbReference type="EMBL" id="AL050295">
    <property type="protein sequence ID" value="CAB43394.1"/>
    <property type="status" value="ALT_SEQ"/>
    <property type="molecule type" value="mRNA"/>
</dbReference>
<dbReference type="EMBL" id="AL832125">
    <property type="status" value="NOT_ANNOTATED_CDS"/>
    <property type="molecule type" value="mRNA"/>
</dbReference>
<dbReference type="EMBL" id="AL096772">
    <property type="status" value="NOT_ANNOTATED_CDS"/>
    <property type="molecule type" value="Genomic_DNA"/>
</dbReference>
<dbReference type="EMBL" id="BC066121">
    <property type="protein sequence ID" value="AAH66121.1"/>
    <property type="molecule type" value="mRNA"/>
</dbReference>
<dbReference type="EMBL" id="AY255552">
    <property type="protein sequence ID" value="AAO85064.1"/>
    <property type="molecule type" value="mRNA"/>
</dbReference>
<dbReference type="CCDS" id="CCDS4919.1">
    <molecule id="Q8IZF2-1"/>
</dbReference>
<dbReference type="PIR" id="T08685">
    <property type="entry name" value="T08685"/>
</dbReference>
<dbReference type="RefSeq" id="NP_001091988.1">
    <molecule id="Q8IZF2-1"/>
    <property type="nucleotide sequence ID" value="NM_001098518.2"/>
</dbReference>
<dbReference type="RefSeq" id="NP_056049.4">
    <molecule id="Q8IZF2-1"/>
    <property type="nucleotide sequence ID" value="NM_015234.4"/>
</dbReference>
<dbReference type="SMR" id="Q8IZF2"/>
<dbReference type="BioGRID" id="128719">
    <property type="interactions" value="7"/>
</dbReference>
<dbReference type="FunCoup" id="Q8IZF2">
    <property type="interactions" value="68"/>
</dbReference>
<dbReference type="IntAct" id="Q8IZF2">
    <property type="interactions" value="7"/>
</dbReference>
<dbReference type="MINT" id="Q8IZF2"/>
<dbReference type="STRING" id="9606.ENSP00000283296"/>
<dbReference type="ChEMBL" id="CHEMBL4523888"/>
<dbReference type="MEROPS" id="P02.019"/>
<dbReference type="GlyConnect" id="1914">
    <property type="glycosylation" value="28 N-Linked glycans (14 sites)"/>
</dbReference>
<dbReference type="GlyCosmos" id="Q8IZF2">
    <property type="glycosylation" value="27 sites, 34 glycans"/>
</dbReference>
<dbReference type="GlyGen" id="Q8IZF2">
    <property type="glycosylation" value="28 sites, 62 N-linked glycans (16 sites), 6 O-linked glycans (2 sites)"/>
</dbReference>
<dbReference type="iPTMnet" id="Q8IZF2"/>
<dbReference type="PhosphoSitePlus" id="Q8IZF2"/>
<dbReference type="BioMuta" id="ADGRF5"/>
<dbReference type="DMDM" id="229462973"/>
<dbReference type="jPOST" id="Q8IZF2"/>
<dbReference type="MassIVE" id="Q8IZF2"/>
<dbReference type="PaxDb" id="9606-ENSP00000283296"/>
<dbReference type="PeptideAtlas" id="Q8IZF2"/>
<dbReference type="ProteomicsDB" id="71338">
    <molecule id="Q8IZF2-1"/>
</dbReference>
<dbReference type="ProteomicsDB" id="71339">
    <molecule id="Q8IZF2-2"/>
</dbReference>
<dbReference type="ProteomicsDB" id="71340">
    <molecule id="Q8IZF2-3"/>
</dbReference>
<dbReference type="Antibodypedia" id="16896">
    <property type="antibodies" value="239 antibodies from 28 providers"/>
</dbReference>
<dbReference type="DNASU" id="221395"/>
<dbReference type="Ensembl" id="ENST00000265417.7">
    <molecule id="Q8IZF2-1"/>
    <property type="protein sequence ID" value="ENSP00000265417.6"/>
    <property type="gene ID" value="ENSG00000069122.19"/>
</dbReference>
<dbReference type="Ensembl" id="ENST00000283296.12">
    <molecule id="Q8IZF2-1"/>
    <property type="protein sequence ID" value="ENSP00000283296.7"/>
    <property type="gene ID" value="ENSG00000069122.19"/>
</dbReference>
<dbReference type="GeneID" id="221395"/>
<dbReference type="KEGG" id="hsa:221395"/>
<dbReference type="MANE-Select" id="ENST00000283296.12">
    <property type="protein sequence ID" value="ENSP00000283296.7"/>
    <property type="RefSeq nucleotide sequence ID" value="NM_001098518.2"/>
    <property type="RefSeq protein sequence ID" value="NP_001091988.1"/>
</dbReference>
<dbReference type="UCSC" id="uc003oyo.5">
    <molecule id="Q8IZF2-1"/>
    <property type="organism name" value="human"/>
</dbReference>
<dbReference type="AGR" id="HGNC:19030"/>
<dbReference type="CTD" id="221395"/>
<dbReference type="DisGeNET" id="221395"/>
<dbReference type="GeneCards" id="ADGRF5"/>
<dbReference type="HGNC" id="HGNC:19030">
    <property type="gene designation" value="ADGRF5"/>
</dbReference>
<dbReference type="HPA" id="ENSG00000069122">
    <property type="expression patterns" value="Tissue enhanced (lung)"/>
</dbReference>
<dbReference type="MIM" id="620874">
    <property type="type" value="gene"/>
</dbReference>
<dbReference type="neXtProt" id="NX_Q8IZF2"/>
<dbReference type="OpenTargets" id="ENSG00000069122"/>
<dbReference type="PharmGKB" id="PA134886165"/>
<dbReference type="VEuPathDB" id="HostDB:ENSG00000069122"/>
<dbReference type="eggNOG" id="KOG4193">
    <property type="taxonomic scope" value="Eukaryota"/>
</dbReference>
<dbReference type="GeneTree" id="ENSGT00940000154603"/>
<dbReference type="HOGENOM" id="CLU_002753_3_5_1"/>
<dbReference type="InParanoid" id="Q8IZF2"/>
<dbReference type="OMA" id="RIAYMRH"/>
<dbReference type="OrthoDB" id="10040049at2759"/>
<dbReference type="PAN-GO" id="Q8IZF2">
    <property type="GO annotations" value="6 GO annotations based on evolutionary models"/>
</dbReference>
<dbReference type="PhylomeDB" id="Q8IZF2"/>
<dbReference type="TreeFam" id="TF316380"/>
<dbReference type="PathwayCommons" id="Q8IZF2"/>
<dbReference type="Reactome" id="R-HSA-5683826">
    <property type="pathway name" value="Surfactant metabolism"/>
</dbReference>
<dbReference type="SignaLink" id="Q8IZF2"/>
<dbReference type="BioGRID-ORCS" id="221395">
    <property type="hits" value="16 hits in 1149 CRISPR screens"/>
</dbReference>
<dbReference type="ChiTaRS" id="ADGRF5">
    <property type="organism name" value="human"/>
</dbReference>
<dbReference type="GeneWiki" id="GPR116"/>
<dbReference type="GenomeRNAi" id="221395"/>
<dbReference type="Pharos" id="Q8IZF2">
    <property type="development level" value="Tbio"/>
</dbReference>
<dbReference type="PRO" id="PR:Q8IZF2"/>
<dbReference type="Proteomes" id="UP000005640">
    <property type="component" value="Chromosome 6"/>
</dbReference>
<dbReference type="RNAct" id="Q8IZF2">
    <property type="molecule type" value="protein"/>
</dbReference>
<dbReference type="Bgee" id="ENSG00000069122">
    <property type="expression patterns" value="Expressed in lower lobe of lung and 196 other cell types or tissues"/>
</dbReference>
<dbReference type="GO" id="GO:0045177">
    <property type="term" value="C:apical part of cell"/>
    <property type="evidence" value="ECO:0007669"/>
    <property type="project" value="Ensembl"/>
</dbReference>
<dbReference type="GO" id="GO:0009986">
    <property type="term" value="C:cell surface"/>
    <property type="evidence" value="ECO:0000314"/>
    <property type="project" value="MGI"/>
</dbReference>
<dbReference type="GO" id="GO:0031410">
    <property type="term" value="C:cytoplasmic vesicle"/>
    <property type="evidence" value="ECO:0000314"/>
    <property type="project" value="MGI"/>
</dbReference>
<dbReference type="GO" id="GO:0016020">
    <property type="term" value="C:membrane"/>
    <property type="evidence" value="ECO:0000304"/>
    <property type="project" value="GDB"/>
</dbReference>
<dbReference type="GO" id="GO:0005886">
    <property type="term" value="C:plasma membrane"/>
    <property type="evidence" value="ECO:0007669"/>
    <property type="project" value="UniProtKB-SubCell"/>
</dbReference>
<dbReference type="GO" id="GO:0004930">
    <property type="term" value="F:G protein-coupled receptor activity"/>
    <property type="evidence" value="ECO:0000318"/>
    <property type="project" value="GO_Central"/>
</dbReference>
<dbReference type="GO" id="GO:0007189">
    <property type="term" value="P:adenylate cyclase-activating G protein-coupled receptor signaling pathway"/>
    <property type="evidence" value="ECO:0000318"/>
    <property type="project" value="GO_Central"/>
</dbReference>
<dbReference type="GO" id="GO:0007166">
    <property type="term" value="P:cell surface receptor signaling pathway"/>
    <property type="evidence" value="ECO:0007669"/>
    <property type="project" value="InterPro"/>
</dbReference>
<dbReference type="GO" id="GO:0006112">
    <property type="term" value="P:energy reserve metabolic process"/>
    <property type="evidence" value="ECO:0000318"/>
    <property type="project" value="GO_Central"/>
</dbReference>
<dbReference type="GO" id="GO:0048821">
    <property type="term" value="P:erythrocyte development"/>
    <property type="evidence" value="ECO:0007669"/>
    <property type="project" value="Ensembl"/>
</dbReference>
<dbReference type="GO" id="GO:0045444">
    <property type="term" value="P:fat cell differentiation"/>
    <property type="evidence" value="ECO:0000318"/>
    <property type="project" value="GO_Central"/>
</dbReference>
<dbReference type="GO" id="GO:0007186">
    <property type="term" value="P:G protein-coupled receptor signaling pathway"/>
    <property type="evidence" value="ECO:0000304"/>
    <property type="project" value="GDB"/>
</dbReference>
<dbReference type="GO" id="GO:0003094">
    <property type="term" value="P:glomerular filtration"/>
    <property type="evidence" value="ECO:0007669"/>
    <property type="project" value="Ensembl"/>
</dbReference>
<dbReference type="GO" id="GO:0042593">
    <property type="term" value="P:glucose homeostasis"/>
    <property type="evidence" value="ECO:0007669"/>
    <property type="project" value="Ensembl"/>
</dbReference>
<dbReference type="GO" id="GO:0042116">
    <property type="term" value="P:macrophage activation"/>
    <property type="evidence" value="ECO:0007669"/>
    <property type="project" value="Ensembl"/>
</dbReference>
<dbReference type="GO" id="GO:0043031">
    <property type="term" value="P:negative regulation of macrophage activation"/>
    <property type="evidence" value="ECO:0007669"/>
    <property type="project" value="Ensembl"/>
</dbReference>
<dbReference type="GO" id="GO:0061626">
    <property type="term" value="P:pharyngeal arch artery morphogenesis"/>
    <property type="evidence" value="ECO:0007669"/>
    <property type="project" value="Ensembl"/>
</dbReference>
<dbReference type="GO" id="GO:0008654">
    <property type="term" value="P:phospholipid biosynthetic process"/>
    <property type="evidence" value="ECO:0007669"/>
    <property type="project" value="Ensembl"/>
</dbReference>
<dbReference type="GO" id="GO:0071073">
    <property type="term" value="P:positive regulation of phospholipid biosynthetic process"/>
    <property type="evidence" value="ECO:0007669"/>
    <property type="project" value="Ensembl"/>
</dbReference>
<dbReference type="GO" id="GO:0019216">
    <property type="term" value="P:regulation of lipid metabolic process"/>
    <property type="evidence" value="ECO:0000318"/>
    <property type="project" value="GO_Central"/>
</dbReference>
<dbReference type="GO" id="GO:0043129">
    <property type="term" value="P:surfactant homeostasis"/>
    <property type="evidence" value="ECO:0007669"/>
    <property type="project" value="Ensembl"/>
</dbReference>
<dbReference type="CDD" id="cd15254">
    <property type="entry name" value="7tmB2_GPR116_Ig-Hepta"/>
    <property type="match status" value="1"/>
</dbReference>
<dbReference type="FunFam" id="1.20.1070.10:FF:000058">
    <property type="entry name" value="Adhesion G protein-coupled receptor F5"/>
    <property type="match status" value="1"/>
</dbReference>
<dbReference type="FunFam" id="2.60.220.50:FF:000021">
    <property type="entry name" value="Adhesion G protein-coupled receptor F5"/>
    <property type="match status" value="1"/>
</dbReference>
<dbReference type="FunFam" id="2.60.40.10:FF:002239">
    <property type="entry name" value="Adhesion G protein-coupled receptor F5"/>
    <property type="match status" value="1"/>
</dbReference>
<dbReference type="Gene3D" id="2.60.220.50">
    <property type="match status" value="1"/>
</dbReference>
<dbReference type="Gene3D" id="2.60.40.10">
    <property type="entry name" value="Immunoglobulins"/>
    <property type="match status" value="2"/>
</dbReference>
<dbReference type="Gene3D" id="1.20.1070.10">
    <property type="entry name" value="Rhodopsin 7-helix transmembrane proteins"/>
    <property type="match status" value="1"/>
</dbReference>
<dbReference type="Gene3D" id="3.30.70.960">
    <property type="entry name" value="SEA domain"/>
    <property type="match status" value="1"/>
</dbReference>
<dbReference type="InterPro" id="IPR051587">
    <property type="entry name" value="Adhesion_GPCR"/>
</dbReference>
<dbReference type="InterPro" id="IPR057244">
    <property type="entry name" value="GAIN_B"/>
</dbReference>
<dbReference type="InterPro" id="IPR046338">
    <property type="entry name" value="GAIN_dom_sf"/>
</dbReference>
<dbReference type="InterPro" id="IPR017981">
    <property type="entry name" value="GPCR_2-like_7TM"/>
</dbReference>
<dbReference type="InterPro" id="IPR008078">
    <property type="entry name" value="GPCR_2_Ig-hepta-like_rcpt"/>
</dbReference>
<dbReference type="InterPro" id="IPR000832">
    <property type="entry name" value="GPCR_2_secretin-like"/>
</dbReference>
<dbReference type="InterPro" id="IPR017983">
    <property type="entry name" value="GPCR_2_secretin-like_CS"/>
</dbReference>
<dbReference type="InterPro" id="IPR000203">
    <property type="entry name" value="GPS"/>
</dbReference>
<dbReference type="InterPro" id="IPR007110">
    <property type="entry name" value="Ig-like_dom"/>
</dbReference>
<dbReference type="InterPro" id="IPR036179">
    <property type="entry name" value="Ig-like_dom_sf"/>
</dbReference>
<dbReference type="InterPro" id="IPR013783">
    <property type="entry name" value="Ig-like_fold"/>
</dbReference>
<dbReference type="InterPro" id="IPR003599">
    <property type="entry name" value="Ig_sub"/>
</dbReference>
<dbReference type="InterPro" id="IPR003598">
    <property type="entry name" value="Ig_sub2"/>
</dbReference>
<dbReference type="InterPro" id="IPR000082">
    <property type="entry name" value="SEA_dom"/>
</dbReference>
<dbReference type="InterPro" id="IPR036364">
    <property type="entry name" value="SEA_dom_sf"/>
</dbReference>
<dbReference type="PANTHER" id="PTHR45813:SF4">
    <property type="entry name" value="ADHESION G PROTEIN-COUPLED RECEPTOR F5"/>
    <property type="match status" value="1"/>
</dbReference>
<dbReference type="PANTHER" id="PTHR45813">
    <property type="entry name" value="IG-LIKE DOMAIN-CONTAINING PROTEIN"/>
    <property type="match status" value="1"/>
</dbReference>
<dbReference type="Pfam" id="PF00002">
    <property type="entry name" value="7tm_2"/>
    <property type="match status" value="1"/>
</dbReference>
<dbReference type="Pfam" id="PF25387">
    <property type="entry name" value="ADGRF3_N"/>
    <property type="match status" value="1"/>
</dbReference>
<dbReference type="Pfam" id="PF01825">
    <property type="entry name" value="GPS"/>
    <property type="match status" value="1"/>
</dbReference>
<dbReference type="Pfam" id="PF13927">
    <property type="entry name" value="Ig_3"/>
    <property type="match status" value="1"/>
</dbReference>
<dbReference type="Pfam" id="PF01390">
    <property type="entry name" value="SEA"/>
    <property type="match status" value="1"/>
</dbReference>
<dbReference type="PRINTS" id="PR00249">
    <property type="entry name" value="GPCRSECRETIN"/>
</dbReference>
<dbReference type="PRINTS" id="PR01695">
    <property type="entry name" value="IGHEPTARCPTR"/>
</dbReference>
<dbReference type="SMART" id="SM00303">
    <property type="entry name" value="GPS"/>
    <property type="match status" value="1"/>
</dbReference>
<dbReference type="SMART" id="SM00409">
    <property type="entry name" value="IG"/>
    <property type="match status" value="2"/>
</dbReference>
<dbReference type="SMART" id="SM00408">
    <property type="entry name" value="IGc2"/>
    <property type="match status" value="2"/>
</dbReference>
<dbReference type="SUPFAM" id="SSF48726">
    <property type="entry name" value="Immunoglobulin"/>
    <property type="match status" value="2"/>
</dbReference>
<dbReference type="SUPFAM" id="SSF82671">
    <property type="entry name" value="SEA domain"/>
    <property type="match status" value="1"/>
</dbReference>
<dbReference type="PROSITE" id="PS00650">
    <property type="entry name" value="G_PROTEIN_RECEP_F2_2"/>
    <property type="match status" value="1"/>
</dbReference>
<dbReference type="PROSITE" id="PS50261">
    <property type="entry name" value="G_PROTEIN_RECEP_F2_4"/>
    <property type="match status" value="1"/>
</dbReference>
<dbReference type="PROSITE" id="PS50221">
    <property type="entry name" value="GAIN_B"/>
    <property type="match status" value="1"/>
</dbReference>
<dbReference type="PROSITE" id="PS50835">
    <property type="entry name" value="IG_LIKE"/>
    <property type="match status" value="3"/>
</dbReference>
<dbReference type="PROSITE" id="PS50024">
    <property type="entry name" value="SEA"/>
    <property type="match status" value="1"/>
</dbReference>
<organism>
    <name type="scientific">Homo sapiens</name>
    <name type="common">Human</name>
    <dbReference type="NCBI Taxonomy" id="9606"/>
    <lineage>
        <taxon>Eukaryota</taxon>
        <taxon>Metazoa</taxon>
        <taxon>Chordata</taxon>
        <taxon>Craniata</taxon>
        <taxon>Vertebrata</taxon>
        <taxon>Euteleostomi</taxon>
        <taxon>Mammalia</taxon>
        <taxon>Eutheria</taxon>
        <taxon>Euarchontoglires</taxon>
        <taxon>Primates</taxon>
        <taxon>Haplorrhini</taxon>
        <taxon>Catarrhini</taxon>
        <taxon>Hominidae</taxon>
        <taxon>Homo</taxon>
    </lineage>
</organism>
<name>AGRF5_HUMAN</name>
<feature type="signal peptide" evidence="3">
    <location>
        <begin position="1"/>
        <end position="21"/>
    </location>
</feature>
<feature type="chain" id="PRO_0000012896" description="Adhesion G protein-coupled receptor F5">
    <location>
        <begin position="22"/>
        <end position="1346"/>
    </location>
</feature>
<feature type="topological domain" description="Extracellular" evidence="21">
    <location>
        <begin position="22"/>
        <end position="1006"/>
    </location>
</feature>
<feature type="transmembrane region" description="Helical; Name=1" evidence="3">
    <location>
        <begin position="1007"/>
        <end position="1027"/>
    </location>
</feature>
<feature type="topological domain" description="Cytoplasmic" evidence="21">
    <location>
        <begin position="1028"/>
        <end position="1053"/>
    </location>
</feature>
<feature type="transmembrane region" description="Helical; Name=2" evidence="3">
    <location>
        <begin position="1054"/>
        <end position="1074"/>
    </location>
</feature>
<feature type="topological domain" description="Extracellular" evidence="21">
    <location>
        <begin position="1075"/>
        <end position="1090"/>
    </location>
</feature>
<feature type="transmembrane region" description="Helical; Name=3" evidence="3">
    <location>
        <begin position="1091"/>
        <end position="1111"/>
    </location>
</feature>
<feature type="topological domain" description="Cytoplasmic" evidence="21">
    <location>
        <begin position="1112"/>
        <end position="1128"/>
    </location>
</feature>
<feature type="transmembrane region" description="Helical; Name=4" evidence="3">
    <location>
        <begin position="1129"/>
        <end position="1149"/>
    </location>
</feature>
<feature type="topological domain" description="Extracellular" evidence="21">
    <location>
        <begin position="1150"/>
        <end position="1173"/>
    </location>
</feature>
<feature type="transmembrane region" description="Helical; Name=5" evidence="3">
    <location>
        <begin position="1174"/>
        <end position="1194"/>
    </location>
</feature>
<feature type="topological domain" description="Cytoplasmic" evidence="21">
    <location>
        <begin position="1195"/>
        <end position="1220"/>
    </location>
</feature>
<feature type="transmembrane region" description="Helical; Name=6" evidence="3">
    <location>
        <begin position="1221"/>
        <end position="1241"/>
    </location>
</feature>
<feature type="topological domain" description="Extracellular" evidence="21">
    <location>
        <begin position="1242"/>
        <end position="1244"/>
    </location>
</feature>
<feature type="transmembrane region" description="Helical; Name=7" evidence="3">
    <location>
        <begin position="1245"/>
        <end position="1265"/>
    </location>
</feature>
<feature type="topological domain" description="Cytoplasmic" evidence="21">
    <location>
        <begin position="1266"/>
        <end position="1346"/>
    </location>
</feature>
<feature type="domain" description="SEA" evidence="6">
    <location>
        <begin position="166"/>
        <end position="273"/>
    </location>
</feature>
<feature type="domain" description="Ig-like 1">
    <location>
        <begin position="267"/>
        <end position="368"/>
    </location>
</feature>
<feature type="domain" description="Ig-like 2">
    <location>
        <begin position="369"/>
        <end position="466"/>
    </location>
</feature>
<feature type="domain" description="Ig-like 3">
    <location>
        <begin position="471"/>
        <end position="561"/>
    </location>
</feature>
<feature type="domain" description="GAIN-B" evidence="4">
    <location>
        <begin position="842"/>
        <end position="1003"/>
    </location>
</feature>
<feature type="region of interest" description="GPS" evidence="4">
    <location>
        <begin position="954"/>
        <end position="1003"/>
    </location>
</feature>
<feature type="region of interest" description="Tethered agonist" evidence="14 16">
    <location>
        <begin position="991"/>
        <end position="1006"/>
    </location>
</feature>
<feature type="region of interest" description="Disordered" evidence="7">
    <location>
        <begin position="1327"/>
        <end position="1346"/>
    </location>
</feature>
<feature type="compositionally biased region" description="Low complexity" evidence="7">
    <location>
        <begin position="1329"/>
        <end position="1346"/>
    </location>
</feature>
<feature type="site" description="Cleavage; by furin" evidence="2">
    <location>
        <begin position="51"/>
        <end position="52"/>
    </location>
</feature>
<feature type="site" description="Cleavage" evidence="2">
    <location>
        <begin position="226"/>
        <end position="227"/>
    </location>
</feature>
<feature type="site" description="Cleavage; by autolysis" evidence="4 22">
    <location>
        <begin position="990"/>
        <end position="991"/>
    </location>
</feature>
<feature type="modified residue" description="Phosphothreonine" evidence="1">
    <location>
        <position position="1300"/>
    </location>
</feature>
<feature type="modified residue" description="Phosphoserine" evidence="1">
    <location>
        <position position="1307"/>
    </location>
</feature>
<feature type="glycosylation site" description="N-linked (GlcNAc...) asparagine" evidence="3">
    <location>
        <position position="73"/>
    </location>
</feature>
<feature type="glycosylation site" description="N-linked (GlcNAc...) asparagine" evidence="3">
    <location>
        <position position="94"/>
    </location>
</feature>
<feature type="glycosylation site" description="N-linked (GlcNAc...) asparagine" evidence="3">
    <location>
        <position position="106"/>
    </location>
</feature>
<feature type="glycosylation site" description="N-linked (GlcNAc...) asparagine" evidence="3">
    <location>
        <position position="188"/>
    </location>
</feature>
<feature type="glycosylation site" description="N-linked (GlcNAc...) asparagine" evidence="10">
    <location>
        <position position="256"/>
    </location>
</feature>
<feature type="glycosylation site" description="N-linked (GlcNAc...) asparagine" evidence="3">
    <location>
        <position position="272"/>
    </location>
</feature>
<feature type="glycosylation site" description="N-linked (GlcNAc...) asparagine" evidence="3">
    <location>
        <position position="301"/>
    </location>
</feature>
<feature type="glycosylation site" description="N-linked (GlcNAc...) asparagine" evidence="10">
    <location>
        <position position="315"/>
    </location>
</feature>
<feature type="glycosylation site" description="N-linked (GlcNAc...) asparagine" evidence="3">
    <location>
        <position position="328"/>
    </location>
</feature>
<feature type="glycosylation site" description="N-linked (GlcNAc...) asparagine" evidence="3">
    <location>
        <position position="398"/>
    </location>
</feature>
<feature type="glycosylation site" description="N-linked (GlcNAc...) asparagine" evidence="3">
    <location>
        <position position="472"/>
    </location>
</feature>
<feature type="glycosylation site" description="N-linked (GlcNAc...) asparagine" evidence="3">
    <location>
        <position position="487"/>
    </location>
</feature>
<feature type="glycosylation site" description="N-linked (GlcNAc...) asparagine" evidence="3">
    <location>
        <position position="505"/>
    </location>
</feature>
<feature type="glycosylation site" description="N-linked (GlcNAc...) asparagine" evidence="3">
    <location>
        <position position="540"/>
    </location>
</feature>
<feature type="glycosylation site" description="N-linked (GlcNAc...) asparagine" evidence="3">
    <location>
        <position position="627"/>
    </location>
</feature>
<feature type="glycosylation site" description="N-linked (GlcNAc...) asparagine" evidence="3">
    <location>
        <position position="649"/>
    </location>
</feature>
<feature type="glycosylation site" description="N-linked (GlcNAc...) asparagine" evidence="3">
    <location>
        <position position="666"/>
    </location>
</feature>
<feature type="glycosylation site" description="N-linked (GlcNAc...) asparagine" evidence="3">
    <location>
        <position position="820"/>
    </location>
</feature>
<feature type="glycosylation site" description="N-linked (GlcNAc...) asparagine" evidence="3">
    <location>
        <position position="931"/>
    </location>
</feature>
<feature type="glycosylation site" description="N-linked (GlcNAc...) asparagine" evidence="3">
    <location>
        <position position="963"/>
    </location>
</feature>
<feature type="glycosylation site" description="N-linked (GlcNAc...) asparagine" evidence="3">
    <location>
        <position position="982"/>
    </location>
</feature>
<feature type="disulfide bond" evidence="5">
    <location>
        <begin position="293"/>
        <end position="350"/>
    </location>
</feature>
<feature type="disulfide bond" evidence="5">
    <location>
        <begin position="391"/>
        <end position="449"/>
    </location>
</feature>
<feature type="disulfide bond" evidence="5">
    <location>
        <begin position="492"/>
        <end position="545"/>
    </location>
</feature>
<feature type="disulfide bond" evidence="4">
    <location>
        <begin position="954"/>
        <end position="985"/>
    </location>
</feature>
<feature type="disulfide bond" evidence="4">
    <location>
        <begin position="973"/>
        <end position="987"/>
    </location>
</feature>
<feature type="splice variant" id="VSP_039130" description="In isoform 3." evidence="19">
    <original>NESNFFVTPEIIFEGDTVSLVCEKEVLSSNVSWRYEEQQLEIQNSSRFSIYTALFNNMTSVSKLTIHNITPGDAGEYVCKLILDIFEYECKKKIDVMPIQILANEEMKVMCDNNPVSLNCCSQGNVNWSKVEWKQEGKINIPG</original>
    <variation>R</variation>
    <location>
        <begin position="272"/>
        <end position="414"/>
    </location>
</feature>
<feature type="splice variant" id="VSP_010837" description="In isoform 2." evidence="18">
    <location>
        <begin position="1273"/>
        <end position="1292"/>
    </location>
</feature>
<feature type="splice variant" id="VSP_010838" description="In isoform 2." evidence="18">
    <location>
        <begin position="1322"/>
        <end position="1346"/>
    </location>
</feature>
<feature type="sequence variant" id="VAR_025326" description="In dbSNP:rs586024." evidence="8 9 11 17">
    <original>T</original>
    <variation>M</variation>
    <location>
        <position position="604"/>
    </location>
</feature>
<feature type="sequence variant" id="VAR_055291" description="In dbSNP:rs9395218." evidence="11">
    <original>V</original>
    <variation>I</variation>
    <location>
        <position position="801"/>
    </location>
</feature>
<feature type="sequence variant" id="VAR_024477" description="In dbSNP:rs547499." evidence="8 9">
    <original>M</original>
    <variation>T</variation>
    <location>
        <position position="856"/>
    </location>
</feature>
<feature type="mutagenesis site" description="No effect on activation by exogenous ligands, nor on subcellular location. Loss of activation by exogenous ligands; when associated with 1240-I--S-1243. Increased activation by exogenous agonists; when associated with K-l009 or with T-1252 or A-1256." evidence="16">
    <location>
        <begin position="991"/>
        <end position="996"/>
    </location>
</feature>
<feature type="mutagenesis site" description="No effect on activation by exogenous agonist. Increased activation by exogenous agonist; when associated with 991-T--L-996 del." evidence="16">
    <original>G</original>
    <variation>K</variation>
    <location>
        <position position="1009"/>
    </location>
</feature>
<feature type="mutagenesis site" description="No effect on activation by exogenous agonist." evidence="16">
    <original>QDN</original>
    <variation>HDG</variation>
    <location>
        <begin position="1075"/>
        <end position="1077"/>
    </location>
</feature>
<feature type="mutagenesis site" description="No effect on activation by exogenous agonist." evidence="16">
    <original>ILCK</original>
    <variation>PLNE</variation>
    <location>
        <begin position="1080"/>
        <end position="1083"/>
    </location>
</feature>
<feature type="mutagenesis site" description="No effect on activation by exogenous agonist; when associated with M-1157 and A-1161." evidence="16">
    <original>R</original>
    <variation>Q</variation>
    <location>
        <position position="1153"/>
    </location>
</feature>
<feature type="mutagenesis site" description="No effect on activation by exogenous agonist; when associated with Q-1153 and A-1161." evidence="16">
    <original>T</original>
    <variation>M</variation>
    <location>
        <position position="1157"/>
    </location>
</feature>
<feature type="mutagenesis site" description="No effect on activation by exogenous agonist; when associated with Q-1153 and M-1157." evidence="16">
    <original>V</original>
    <variation>A</variation>
    <location>
        <position position="1161"/>
    </location>
</feature>
<feature type="mutagenesis site" description="Loss of activation by exogenous ligand; when associated with 991-T--L-996 del." evidence="16">
    <original>FPGT</original>
    <variation>IQGS</variation>
    <location>
        <begin position="1240"/>
        <end position="1243"/>
    </location>
</feature>
<feature type="mutagenesis site" description="Increased activation by exogenous agonists; when associated with 991-T--L-996 del." evidence="16">
    <original>A</original>
    <variation>T</variation>
    <location>
        <position position="1252"/>
    </location>
</feature>
<feature type="mutagenesis site" description="Increased activation by exogenous agonists; when associated with 991-T--L-996 del." evidence="16">
    <original>V</original>
    <variation>A</variation>
    <location>
        <position position="1256"/>
    </location>
</feature>
<feature type="sequence conflict" description="In Ref. 1; AAN46672." evidence="21" ref="1">
    <location>
        <position position="272"/>
    </location>
</feature>
<feature type="sequence conflict" description="In Ref. 7; CAB43394." evidence="21" ref="7">
    <original>V</original>
    <variation>I</variation>
    <location>
        <position position="573"/>
    </location>
</feature>
<feature type="sequence conflict" description="In Ref. 5; AL832125." evidence="21" ref="5">
    <original>Q</original>
    <variation>R</variation>
    <location>
        <position position="1075"/>
    </location>
</feature>
<sequence length="1346" mass="149457">MKSPRRTTLCLMFIVIYSSKAALNWNYESTIHPLSLHEHEPAGEEALRQKRAVATKSPTAEEYTVNIEISFENASFLDPIKAYLNSLSFPIHGNNTDQITDILSINVTTVCRPAGNEIWCSCETGYGWPRERCLHNLICQERDVFLPGHHCSCLKELPPNGPFCLLQEDVTLNMRVRLNVGFQEDLMNTSSALYRSYKTDLETAFRKGYGILPGFKGVTVTGFKSGSVVVTYEVKTTPPSLELIHKANEQVVQSLNQTYKMDYNSFQAVTINESNFFVTPEIIFEGDTVSLVCEKEVLSSNVSWRYEEQQLEIQNSSRFSIYTALFNNMTSVSKLTIHNITPGDAGEYVCKLILDIFEYECKKKIDVMPIQILANEEMKVMCDNNPVSLNCCSQGNVNWSKVEWKQEGKINIPGTPETDIDSSCSRYTLKADGTQCPSGSSGTTVIYTCEFISAYGARGSANIKVTFISVANLTITPDPISVSEGQNFSIKCISDVSNYDEVYWNTSAGIKIYQRFYTTRRYLDGAESVLTVKTSTREWNGTYHCIFRYKNSYSIATKDVIVHPLPLKLNIMVDPLEATVSCSGSHHIKCCIEEDGDYKVTFHTGSSSLPAAKEVNKKQVCYKHNFNASSVSWCSKTVDVCCHFTNAANNSVWSPSMKLNLVPGENITCQDPVIGVGEPGKVIQKLCRFSNVPSSPESPIGGTITYKCVGSQWEEKRNDCISAPINSLLQMAKALIKSPSQDEMLPTYLKDLSISIDKAEHEISSSPGSLGAIINILDLLSTVPTQVNSEMMTHVLSTVNVILGKPVLNTWKVLQQQWTNQSSQLLHSVERFSQALQSGDSPPLSFSQTNVQMSSMVIKSSHPETYQQRFVFPYFDLWGNVVIDKSYLENLQSDSSIVTMAFPTLQAILAQDIQENNFAESLVMTTTVSHNTTMPFRISMTFKNNSPSGGETKCVFWNFRLANNTGGWDSSGCYVEEGDGDNVTCICDHLTSFSILMSPDSPDPSSLLGILLDIISYVGVGFSILSLAACLVVEAVVWKSVTKNRTSYMRHTCIVNIAASLLVANTWFIVVAAIQDNRYILCKTACVAATFFIHFFYLSVFFWMLTLGLMLFYRLVFILHETSRSTQKAIAFCLGYGCPLAISVITLGATQPREVYTRKNVCWLNWEDTKALLAFAIPALIIVVVNITITIVVITKILRPSIGDKPCKQEKSSLFQISKSIGVLTPLLGLTWGFGLTTVFPGTNLVFHIIFAILNVFQGLFILLFGCLWDLKVQEALLNKFSLSRWSSQHSKSTSLGSSTPVFSMSSPISRRFNNLFGKTGTYNVSTPEATSSSLENSSSASSLLN</sequence>
<proteinExistence type="evidence at protein level"/>
<gene>
    <name evidence="23" type="primary">ADGRF5</name>
    <name type="synonym">GPR116</name>
    <name type="synonym">KIAA0758</name>
</gene>
<accession>Q8IZF2</accession>
<accession>O94858</accession>
<accession>Q5TF06</accession>
<accession>Q6RGN2</accession>
<accession>Q86SP0</accession>
<accession>Q9Y3Z2</accession>